<dbReference type="EMBL" id="Z71261">
    <property type="protein sequence ID" value="CAA95804.1"/>
    <property type="molecule type" value="Genomic_DNA"/>
</dbReference>
<dbReference type="PIR" id="T21191">
    <property type="entry name" value="T21191"/>
</dbReference>
<dbReference type="RefSeq" id="NP_492058.1">
    <property type="nucleotide sequence ID" value="NM_059657.6"/>
</dbReference>
<dbReference type="SMR" id="P52554"/>
<dbReference type="BioGRID" id="37916">
    <property type="interactions" value="21"/>
</dbReference>
<dbReference type="FunCoup" id="P52554">
    <property type="interactions" value="2534"/>
</dbReference>
<dbReference type="IntAct" id="P52554">
    <property type="interactions" value="1"/>
</dbReference>
<dbReference type="STRING" id="6239.F21C3.5.1"/>
<dbReference type="PaxDb" id="6239-F21C3.5"/>
<dbReference type="PeptideAtlas" id="P52554"/>
<dbReference type="EnsemblMetazoa" id="F21C3.5.1">
    <property type="protein sequence ID" value="F21C3.5.1"/>
    <property type="gene ID" value="WBGene00009004"/>
</dbReference>
<dbReference type="GeneID" id="172474"/>
<dbReference type="KEGG" id="cel:CELE_F21C3.5"/>
<dbReference type="AGR" id="WB:WBGene00009004"/>
<dbReference type="CTD" id="172474"/>
<dbReference type="WormBase" id="F21C3.5">
    <property type="protein sequence ID" value="CE05680"/>
    <property type="gene ID" value="WBGene00009004"/>
    <property type="gene designation" value="pfd-6"/>
</dbReference>
<dbReference type="eggNOG" id="KOG3478">
    <property type="taxonomic scope" value="Eukaryota"/>
</dbReference>
<dbReference type="GeneTree" id="ENSGT00390000010512"/>
<dbReference type="HOGENOM" id="CLU_125172_0_1_1"/>
<dbReference type="InParanoid" id="P52554"/>
<dbReference type="OMA" id="VQTEFAQ"/>
<dbReference type="OrthoDB" id="248120at2759"/>
<dbReference type="PhylomeDB" id="P52554"/>
<dbReference type="PRO" id="PR:P52554"/>
<dbReference type="Proteomes" id="UP000001940">
    <property type="component" value="Chromosome I"/>
</dbReference>
<dbReference type="Bgee" id="WBGene00009004">
    <property type="expression patterns" value="Expressed in embryo and 4 other cell types or tissues"/>
</dbReference>
<dbReference type="GO" id="GO:0005737">
    <property type="term" value="C:cytoplasm"/>
    <property type="evidence" value="ECO:0000314"/>
    <property type="project" value="WormBase"/>
</dbReference>
<dbReference type="GO" id="GO:0016272">
    <property type="term" value="C:prefoldin complex"/>
    <property type="evidence" value="ECO:0000318"/>
    <property type="project" value="GO_Central"/>
</dbReference>
<dbReference type="GO" id="GO:0051087">
    <property type="term" value="F:protein-folding chaperone binding"/>
    <property type="evidence" value="ECO:0000318"/>
    <property type="project" value="GO_Central"/>
</dbReference>
<dbReference type="GO" id="GO:0051082">
    <property type="term" value="F:unfolded protein binding"/>
    <property type="evidence" value="ECO:0007669"/>
    <property type="project" value="InterPro"/>
</dbReference>
<dbReference type="GO" id="GO:0051131">
    <property type="term" value="P:chaperone-mediated protein complex assembly"/>
    <property type="evidence" value="ECO:0000318"/>
    <property type="project" value="GO_Central"/>
</dbReference>
<dbReference type="GO" id="GO:0006457">
    <property type="term" value="P:protein folding"/>
    <property type="evidence" value="ECO:0000318"/>
    <property type="project" value="GO_Central"/>
</dbReference>
<dbReference type="CDD" id="cd23161">
    <property type="entry name" value="Prefoldin_6"/>
    <property type="match status" value="1"/>
</dbReference>
<dbReference type="FunFam" id="1.10.287.370:FF:000003">
    <property type="entry name" value="Prefoldin subunit 6"/>
    <property type="match status" value="1"/>
</dbReference>
<dbReference type="Gene3D" id="1.10.287.370">
    <property type="match status" value="1"/>
</dbReference>
<dbReference type="InterPro" id="IPR002777">
    <property type="entry name" value="PFD_beta-like"/>
</dbReference>
<dbReference type="InterPro" id="IPR009053">
    <property type="entry name" value="Prefoldin"/>
</dbReference>
<dbReference type="PANTHER" id="PTHR21431">
    <property type="entry name" value="PREFOLDIN SUBUNIT 6"/>
    <property type="match status" value="1"/>
</dbReference>
<dbReference type="PANTHER" id="PTHR21431:SF0">
    <property type="entry name" value="PREFOLDIN SUBUNIT 6"/>
    <property type="match status" value="1"/>
</dbReference>
<dbReference type="Pfam" id="PF01920">
    <property type="entry name" value="Prefoldin_2"/>
    <property type="match status" value="1"/>
</dbReference>
<dbReference type="SUPFAM" id="SSF46579">
    <property type="entry name" value="Prefoldin"/>
    <property type="match status" value="1"/>
</dbReference>
<reference key="1">
    <citation type="journal article" date="1998" name="Science">
        <title>Genome sequence of the nematode C. elegans: a platform for investigating biology.</title>
        <authorList>
            <consortium name="The C. elegans sequencing consortium"/>
        </authorList>
    </citation>
    <scope>NUCLEOTIDE SEQUENCE [LARGE SCALE GENOMIC DNA]</scope>
    <source>
        <strain>Bristol N2</strain>
    </source>
</reference>
<reference key="2">
    <citation type="journal article" date="2000" name="Nature">
        <title>Functional genomic analysis of C. elegans chromosome I by systematic RNA interference.</title>
        <authorList>
            <person name="Fraser A.G."/>
            <person name="Kamath R.S."/>
            <person name="Zipperlen P."/>
            <person name="Martinez-Campos M."/>
            <person name="Sohrmann M."/>
            <person name="Ahringer J."/>
        </authorList>
    </citation>
    <scope>DISRUPTION PHENOTYPE</scope>
</reference>
<reference key="3">
    <citation type="journal article" date="2008" name="Dev. Biol.">
        <title>Efficient chaperone-mediated tubulin biogenesis is essential for cell division and cell migration in C. elegans.</title>
        <authorList>
            <person name="Lundin V.F."/>
            <person name="Srayko M."/>
            <person name="Hyman A.A."/>
            <person name="Leroux M.R."/>
        </authorList>
    </citation>
    <scope>FUNCTION</scope>
    <scope>SUBCELLULAR LOCATION</scope>
    <scope>TISSUE SPECIFICITY</scope>
    <scope>DISRUPTION PHENOTYPE</scope>
</reference>
<comment type="function">
    <text evidence="1 3">Binds specifically to cytosolic chaperonin (c-CPN) and transfers target proteins to it. Binds to nascent polypeptide chain and promotes folding in an environment in which there are many competing pathways for nonnative proteins (By similarity). Required for positioning of the mitotic spindle.</text>
</comment>
<comment type="subunit">
    <text evidence="1">Heterohexamer of two PFD-alpha type and four PFD-beta type subunits.</text>
</comment>
<comment type="subcellular location">
    <subcellularLocation>
        <location evidence="3">Cytoplasm</location>
    </subcellularLocation>
</comment>
<comment type="tissue specificity">
    <text evidence="3">Expressed in embryonic blastomeres and gonads.</text>
</comment>
<comment type="disruption phenotype">
    <text evidence="2 3">Abnormal locomotion, abnormal morphology, slow growth, defects in distal tip cell migration, defects in developing gonads, and in extreme cases embryonic lethal.</text>
</comment>
<comment type="similarity">
    <text evidence="4">Belongs to the prefoldin subunit beta family.</text>
</comment>
<evidence type="ECO:0000250" key="1"/>
<evidence type="ECO:0000269" key="2">
    <source>
    </source>
</evidence>
<evidence type="ECO:0000269" key="3">
    <source>
    </source>
</evidence>
<evidence type="ECO:0000305" key="4"/>
<gene>
    <name type="primary">pfd-6</name>
    <name type="ORF">F21C3.5</name>
</gene>
<accession>P52554</accession>
<name>PFD6_CAEEL</name>
<sequence>MADMAKFEEEVNKLRTLEKDREKYFTSRQEMEMRLTESKNVKAELDLMESDSKVYKLIGAVLVRQDLEEARSTVEKRLEFIDSETKRVEASISDISKKCTEQRDKVMNMQKSFQMMAQAAAQAQKK</sequence>
<keyword id="KW-0143">Chaperone</keyword>
<keyword id="KW-0963">Cytoplasm</keyword>
<keyword id="KW-1185">Reference proteome</keyword>
<feature type="chain" id="PRO_0000124852" description="Probable prefoldin subunit 6">
    <location>
        <begin position="1"/>
        <end position="126"/>
    </location>
</feature>
<proteinExistence type="evidence at transcript level"/>
<organism>
    <name type="scientific">Caenorhabditis elegans</name>
    <dbReference type="NCBI Taxonomy" id="6239"/>
    <lineage>
        <taxon>Eukaryota</taxon>
        <taxon>Metazoa</taxon>
        <taxon>Ecdysozoa</taxon>
        <taxon>Nematoda</taxon>
        <taxon>Chromadorea</taxon>
        <taxon>Rhabditida</taxon>
        <taxon>Rhabditina</taxon>
        <taxon>Rhabditomorpha</taxon>
        <taxon>Rhabditoidea</taxon>
        <taxon>Rhabditidae</taxon>
        <taxon>Peloderinae</taxon>
        <taxon>Caenorhabditis</taxon>
    </lineage>
</organism>
<protein>
    <recommendedName>
        <fullName>Probable prefoldin subunit 6</fullName>
    </recommendedName>
</protein>